<name>MUTS_BORGP</name>
<feature type="chain" id="PRO_0000224353" description="DNA mismatch repair protein MutS">
    <location>
        <begin position="1"/>
        <end position="862"/>
    </location>
</feature>
<feature type="binding site" evidence="1">
    <location>
        <begin position="608"/>
        <end position="615"/>
    </location>
    <ligand>
        <name>ATP</name>
        <dbReference type="ChEBI" id="CHEBI:30616"/>
    </ligand>
</feature>
<evidence type="ECO:0000255" key="1">
    <source>
        <dbReference type="HAMAP-Rule" id="MF_00096"/>
    </source>
</evidence>
<gene>
    <name evidence="1" type="primary">mutS</name>
    <name type="ordered locus">BG0823</name>
</gene>
<dbReference type="EMBL" id="CP000013">
    <property type="protein sequence ID" value="AAU07645.1"/>
    <property type="molecule type" value="Genomic_DNA"/>
</dbReference>
<dbReference type="RefSeq" id="WP_011194090.1">
    <property type="nucleotide sequence ID" value="NZ_CP028872.1"/>
</dbReference>
<dbReference type="SMR" id="Q65ZX6"/>
<dbReference type="GeneID" id="45161597"/>
<dbReference type="KEGG" id="bga:BG0823"/>
<dbReference type="eggNOG" id="COG0249">
    <property type="taxonomic scope" value="Bacteria"/>
</dbReference>
<dbReference type="HOGENOM" id="CLU_002472_4_0_12"/>
<dbReference type="OrthoDB" id="9802448at2"/>
<dbReference type="Proteomes" id="UP000002276">
    <property type="component" value="Chromosome"/>
</dbReference>
<dbReference type="GO" id="GO:0005524">
    <property type="term" value="F:ATP binding"/>
    <property type="evidence" value="ECO:0007669"/>
    <property type="project" value="UniProtKB-UniRule"/>
</dbReference>
<dbReference type="GO" id="GO:0140664">
    <property type="term" value="F:ATP-dependent DNA damage sensor activity"/>
    <property type="evidence" value="ECO:0007669"/>
    <property type="project" value="InterPro"/>
</dbReference>
<dbReference type="GO" id="GO:0003684">
    <property type="term" value="F:damaged DNA binding"/>
    <property type="evidence" value="ECO:0007669"/>
    <property type="project" value="UniProtKB-UniRule"/>
</dbReference>
<dbReference type="GO" id="GO:0030983">
    <property type="term" value="F:mismatched DNA binding"/>
    <property type="evidence" value="ECO:0007669"/>
    <property type="project" value="InterPro"/>
</dbReference>
<dbReference type="GO" id="GO:0006298">
    <property type="term" value="P:mismatch repair"/>
    <property type="evidence" value="ECO:0007669"/>
    <property type="project" value="UniProtKB-UniRule"/>
</dbReference>
<dbReference type="CDD" id="cd03284">
    <property type="entry name" value="ABC_MutS1"/>
    <property type="match status" value="1"/>
</dbReference>
<dbReference type="Gene3D" id="1.10.1420.10">
    <property type="match status" value="2"/>
</dbReference>
<dbReference type="Gene3D" id="3.40.1170.10">
    <property type="entry name" value="DNA repair protein MutS, domain I"/>
    <property type="match status" value="1"/>
</dbReference>
<dbReference type="Gene3D" id="3.30.420.110">
    <property type="entry name" value="MutS, connector domain"/>
    <property type="match status" value="1"/>
</dbReference>
<dbReference type="Gene3D" id="3.40.50.300">
    <property type="entry name" value="P-loop containing nucleotide triphosphate hydrolases"/>
    <property type="match status" value="1"/>
</dbReference>
<dbReference type="HAMAP" id="MF_00096">
    <property type="entry name" value="MutS"/>
    <property type="match status" value="1"/>
</dbReference>
<dbReference type="InterPro" id="IPR005748">
    <property type="entry name" value="DNA_mismatch_repair_MutS"/>
</dbReference>
<dbReference type="InterPro" id="IPR007695">
    <property type="entry name" value="DNA_mismatch_repair_MutS-lik_N"/>
</dbReference>
<dbReference type="InterPro" id="IPR017261">
    <property type="entry name" value="DNA_mismatch_repair_MutS/MSH"/>
</dbReference>
<dbReference type="InterPro" id="IPR000432">
    <property type="entry name" value="DNA_mismatch_repair_MutS_C"/>
</dbReference>
<dbReference type="InterPro" id="IPR007861">
    <property type="entry name" value="DNA_mismatch_repair_MutS_clamp"/>
</dbReference>
<dbReference type="InterPro" id="IPR007696">
    <property type="entry name" value="DNA_mismatch_repair_MutS_core"/>
</dbReference>
<dbReference type="InterPro" id="IPR016151">
    <property type="entry name" value="DNA_mismatch_repair_MutS_N"/>
</dbReference>
<dbReference type="InterPro" id="IPR036187">
    <property type="entry name" value="DNA_mismatch_repair_MutS_sf"/>
</dbReference>
<dbReference type="InterPro" id="IPR007860">
    <property type="entry name" value="DNA_mmatch_repair_MutS_con_dom"/>
</dbReference>
<dbReference type="InterPro" id="IPR045076">
    <property type="entry name" value="MutS"/>
</dbReference>
<dbReference type="InterPro" id="IPR036678">
    <property type="entry name" value="MutS_con_dom_sf"/>
</dbReference>
<dbReference type="InterPro" id="IPR027417">
    <property type="entry name" value="P-loop_NTPase"/>
</dbReference>
<dbReference type="NCBIfam" id="TIGR01070">
    <property type="entry name" value="mutS1"/>
    <property type="match status" value="1"/>
</dbReference>
<dbReference type="NCBIfam" id="NF003810">
    <property type="entry name" value="PRK05399.1"/>
    <property type="match status" value="1"/>
</dbReference>
<dbReference type="PANTHER" id="PTHR11361:SF34">
    <property type="entry name" value="DNA MISMATCH REPAIR PROTEIN MSH1, MITOCHONDRIAL"/>
    <property type="match status" value="1"/>
</dbReference>
<dbReference type="PANTHER" id="PTHR11361">
    <property type="entry name" value="DNA MISMATCH REPAIR PROTEIN MUTS FAMILY MEMBER"/>
    <property type="match status" value="1"/>
</dbReference>
<dbReference type="Pfam" id="PF01624">
    <property type="entry name" value="MutS_I"/>
    <property type="match status" value="1"/>
</dbReference>
<dbReference type="Pfam" id="PF05188">
    <property type="entry name" value="MutS_II"/>
    <property type="match status" value="1"/>
</dbReference>
<dbReference type="Pfam" id="PF05192">
    <property type="entry name" value="MutS_III"/>
    <property type="match status" value="1"/>
</dbReference>
<dbReference type="Pfam" id="PF05190">
    <property type="entry name" value="MutS_IV"/>
    <property type="match status" value="1"/>
</dbReference>
<dbReference type="Pfam" id="PF00488">
    <property type="entry name" value="MutS_V"/>
    <property type="match status" value="1"/>
</dbReference>
<dbReference type="PIRSF" id="PIRSF037677">
    <property type="entry name" value="DNA_mis_repair_Msh6"/>
    <property type="match status" value="1"/>
</dbReference>
<dbReference type="SMART" id="SM00534">
    <property type="entry name" value="MUTSac"/>
    <property type="match status" value="1"/>
</dbReference>
<dbReference type="SMART" id="SM00533">
    <property type="entry name" value="MUTSd"/>
    <property type="match status" value="1"/>
</dbReference>
<dbReference type="SUPFAM" id="SSF55271">
    <property type="entry name" value="DNA repair protein MutS, domain I"/>
    <property type="match status" value="1"/>
</dbReference>
<dbReference type="SUPFAM" id="SSF53150">
    <property type="entry name" value="DNA repair protein MutS, domain II"/>
    <property type="match status" value="1"/>
</dbReference>
<dbReference type="SUPFAM" id="SSF48334">
    <property type="entry name" value="DNA repair protein MutS, domain III"/>
    <property type="match status" value="1"/>
</dbReference>
<dbReference type="SUPFAM" id="SSF52540">
    <property type="entry name" value="P-loop containing nucleoside triphosphate hydrolases"/>
    <property type="match status" value="1"/>
</dbReference>
<dbReference type="PROSITE" id="PS00486">
    <property type="entry name" value="DNA_MISMATCH_REPAIR_2"/>
    <property type="match status" value="1"/>
</dbReference>
<reference key="1">
    <citation type="journal article" date="2004" name="Nucleic Acids Res.">
        <title>Comparative analysis of the Borrelia garinii genome.</title>
        <authorList>
            <person name="Gloeckner G."/>
            <person name="Lehmann R."/>
            <person name="Romualdi A."/>
            <person name="Pradella S."/>
            <person name="Schulte-Spechtel U."/>
            <person name="Schilhabel M."/>
            <person name="Wilske B."/>
            <person name="Suehnel J."/>
            <person name="Platzer M."/>
        </authorList>
    </citation>
    <scope>NUCLEOTIDE SEQUENCE [LARGE SCALE GENOMIC DNA]</scope>
    <source>
        <strain>ATCC BAA-2496 / DSM 23469 / PBi</strain>
    </source>
</reference>
<sequence length="862" mass="99912">MEKNITPMMRQYLDIKKKYKDAIIFFRVGSFYEMFFDDAIEASKLLNLTLTKRENVPMCGVPYHTSKEYIRKLILFDKKVAICEQASNLTSTGPLEREVVEVITPGVIVDEDFLNDDVNNYLVAISDYKNYYSFSYIDLSTSSLGVMFYENSFFEKLKRDLEKYSPKEIIVSENFYYQYLHKLNLSRFLINRVPAWHLDKDIAIKTIKEHFNILGLSSLGFDEEKPYYISIFLIINHIKNNLKNLLSNIDKIDINNDSSYMFLDDVTQVNLELVKNNNDFSSQYSLYSVLNDCKTAMGKRLLREFILNPILNISEINTRLDHVEFFYKNISLTMTLREAFINIWDIERIISRIQMKRYIKKDFLFIEKALSVFFLVKKLFDKHNFDYWNFDKFEEDSVSKVYFLINSAISDSSDELIKRGYDLKLDNLKDLKINANKYIDEYLESERILSKINNLKIRKTNNRGLFFEVTKSNYSQVPSHFMESQTLSSSKRYKTEKLISLEVDINNAEDSVVAFEQEIFDEIAANVVKHNKVLKKVAEFFAYIDLVVNFGYLAKKNEYKRPVLTSDKEIFLDKSRHPVVEHYVKNAEIFTENFVRINKERHFCLITGPNMAGKSTYLRQVALITLMAHIGSFVPASKALIGITDKIFCRIGASDNLAKGESTFLVEMNETANILRNATEKSLIIMDEVGRGTSTNDGLAIAYSIIEYILEYIKARSLFATHFHELSAINHKAFINLSMKIEKQGNDLVFLREIEEKPSLNSYGIYVARIAGLPLKVIDRANAILESLLSRKGSSFLEFLPYISSDSNDKEALKNDTDVNVKLNEYLELKNFISNIDINNITPFQSIELLNQIVLKVISQSS</sequence>
<protein>
    <recommendedName>
        <fullName evidence="1">DNA mismatch repair protein MutS</fullName>
    </recommendedName>
</protein>
<proteinExistence type="inferred from homology"/>
<comment type="function">
    <text evidence="1">This protein is involved in the repair of mismatches in DNA. It is possible that it carries out the mismatch recognition step. This protein has a weak ATPase activity.</text>
</comment>
<comment type="similarity">
    <text evidence="1">Belongs to the DNA mismatch repair MutS family.</text>
</comment>
<accession>Q65ZX6</accession>
<organism>
    <name type="scientific">Borrelia garinii subsp. bavariensis (strain ATCC BAA-2496 / DSM 23469 / PBi)</name>
    <name type="common">Borreliella bavariensis</name>
    <dbReference type="NCBI Taxonomy" id="290434"/>
    <lineage>
        <taxon>Bacteria</taxon>
        <taxon>Pseudomonadati</taxon>
        <taxon>Spirochaetota</taxon>
        <taxon>Spirochaetia</taxon>
        <taxon>Spirochaetales</taxon>
        <taxon>Borreliaceae</taxon>
        <taxon>Borreliella</taxon>
    </lineage>
</organism>
<keyword id="KW-0067">ATP-binding</keyword>
<keyword id="KW-0227">DNA damage</keyword>
<keyword id="KW-0234">DNA repair</keyword>
<keyword id="KW-0238">DNA-binding</keyword>
<keyword id="KW-0547">Nucleotide-binding</keyword>